<accession>A5WBV8</accession>
<proteinExistence type="inferred from homology"/>
<organism>
    <name type="scientific">Psychrobacter sp. (strain PRwf-1)</name>
    <dbReference type="NCBI Taxonomy" id="349106"/>
    <lineage>
        <taxon>Bacteria</taxon>
        <taxon>Pseudomonadati</taxon>
        <taxon>Pseudomonadota</taxon>
        <taxon>Gammaproteobacteria</taxon>
        <taxon>Moraxellales</taxon>
        <taxon>Moraxellaceae</taxon>
        <taxon>Psychrobacter</taxon>
    </lineage>
</organism>
<dbReference type="EMBL" id="CP000713">
    <property type="protein sequence ID" value="ABQ93149.1"/>
    <property type="molecule type" value="Genomic_DNA"/>
</dbReference>
<dbReference type="SMR" id="A5WBV8"/>
<dbReference type="STRING" id="349106.PsycPRwf_0190"/>
<dbReference type="KEGG" id="prw:PsycPRwf_0190"/>
<dbReference type="eggNOG" id="COG0712">
    <property type="taxonomic scope" value="Bacteria"/>
</dbReference>
<dbReference type="HOGENOM" id="CLU_085114_3_0_6"/>
<dbReference type="GO" id="GO:0005886">
    <property type="term" value="C:plasma membrane"/>
    <property type="evidence" value="ECO:0007669"/>
    <property type="project" value="UniProtKB-SubCell"/>
</dbReference>
<dbReference type="GO" id="GO:0045259">
    <property type="term" value="C:proton-transporting ATP synthase complex"/>
    <property type="evidence" value="ECO:0007669"/>
    <property type="project" value="UniProtKB-KW"/>
</dbReference>
<dbReference type="GO" id="GO:0046933">
    <property type="term" value="F:proton-transporting ATP synthase activity, rotational mechanism"/>
    <property type="evidence" value="ECO:0007669"/>
    <property type="project" value="UniProtKB-UniRule"/>
</dbReference>
<dbReference type="Gene3D" id="1.10.520.20">
    <property type="entry name" value="N-terminal domain of the delta subunit of the F1F0-ATP synthase"/>
    <property type="match status" value="1"/>
</dbReference>
<dbReference type="HAMAP" id="MF_01416">
    <property type="entry name" value="ATP_synth_delta_bact"/>
    <property type="match status" value="1"/>
</dbReference>
<dbReference type="InterPro" id="IPR026015">
    <property type="entry name" value="ATP_synth_OSCP/delta_N_sf"/>
</dbReference>
<dbReference type="InterPro" id="IPR020781">
    <property type="entry name" value="ATPase_OSCP/d_CS"/>
</dbReference>
<dbReference type="InterPro" id="IPR000711">
    <property type="entry name" value="ATPase_OSCP/dsu"/>
</dbReference>
<dbReference type="NCBIfam" id="TIGR01145">
    <property type="entry name" value="ATP_synt_delta"/>
    <property type="match status" value="1"/>
</dbReference>
<dbReference type="NCBIfam" id="NF004402">
    <property type="entry name" value="PRK05758.2-2"/>
    <property type="match status" value="1"/>
</dbReference>
<dbReference type="PANTHER" id="PTHR11910">
    <property type="entry name" value="ATP SYNTHASE DELTA CHAIN"/>
    <property type="match status" value="1"/>
</dbReference>
<dbReference type="Pfam" id="PF00213">
    <property type="entry name" value="OSCP"/>
    <property type="match status" value="2"/>
</dbReference>
<dbReference type="SUPFAM" id="SSF47928">
    <property type="entry name" value="N-terminal domain of the delta subunit of the F1F0-ATP synthase"/>
    <property type="match status" value="1"/>
</dbReference>
<dbReference type="PROSITE" id="PS00389">
    <property type="entry name" value="ATPASE_DELTA"/>
    <property type="match status" value="1"/>
</dbReference>
<feature type="chain" id="PRO_0000371084" description="ATP synthase subunit delta">
    <location>
        <begin position="1"/>
        <end position="209"/>
    </location>
</feature>
<evidence type="ECO:0000255" key="1">
    <source>
        <dbReference type="HAMAP-Rule" id="MF_01416"/>
    </source>
</evidence>
<gene>
    <name evidence="1" type="primary">atpH</name>
    <name type="ordered locus">PsycPRwf_0190</name>
</gene>
<comment type="function">
    <text evidence="1">F(1)F(0) ATP synthase produces ATP from ADP in the presence of a proton or sodium gradient. F-type ATPases consist of two structural domains, F(1) containing the extramembraneous catalytic core and F(0) containing the membrane proton channel, linked together by a central stalk and a peripheral stalk. During catalysis, ATP synthesis in the catalytic domain of F(1) is coupled via a rotary mechanism of the central stalk subunits to proton translocation.</text>
</comment>
<comment type="function">
    <text evidence="1">This protein is part of the stalk that links CF(0) to CF(1). It either transmits conformational changes from CF(0) to CF(1) or is implicated in proton conduction.</text>
</comment>
<comment type="subunit">
    <text evidence="1">F-type ATPases have 2 components, F(1) - the catalytic core - and F(0) - the membrane proton channel. F(1) has five subunits: alpha(3), beta(3), gamma(1), delta(1), epsilon(1). F(0) has three main subunits: a(1), b(2) and c(10-14). The alpha and beta chains form an alternating ring which encloses part of the gamma chain. F(1) is attached to F(0) by a central stalk formed by the gamma and epsilon chains, while a peripheral stalk is formed by the delta and b chains.</text>
</comment>
<comment type="subcellular location">
    <subcellularLocation>
        <location evidence="1">Cell inner membrane</location>
        <topology evidence="1">Peripheral membrane protein</topology>
    </subcellularLocation>
</comment>
<comment type="similarity">
    <text evidence="1">Belongs to the ATPase delta chain family.</text>
</comment>
<reference key="1">
    <citation type="submission" date="2007-05" db="EMBL/GenBank/DDBJ databases">
        <title>Complete sequence of chromosome of Psychrobacter sp. PRwf-1.</title>
        <authorList>
            <consortium name="US DOE Joint Genome Institute"/>
            <person name="Copeland A."/>
            <person name="Lucas S."/>
            <person name="Lapidus A."/>
            <person name="Barry K."/>
            <person name="Detter J.C."/>
            <person name="Glavina del Rio T."/>
            <person name="Hammon N."/>
            <person name="Israni S."/>
            <person name="Dalin E."/>
            <person name="Tice H."/>
            <person name="Pitluck S."/>
            <person name="Chain P."/>
            <person name="Malfatti S."/>
            <person name="Shin M."/>
            <person name="Vergez L."/>
            <person name="Schmutz J."/>
            <person name="Larimer F."/>
            <person name="Land M."/>
            <person name="Hauser L."/>
            <person name="Kyrpides N."/>
            <person name="Kim E."/>
            <person name="Tiedje J."/>
            <person name="Richardson P."/>
        </authorList>
    </citation>
    <scope>NUCLEOTIDE SEQUENCE [LARGE SCALE GENOMIC DNA]</scope>
    <source>
        <strain>PRwf-1</strain>
    </source>
</reference>
<keyword id="KW-0066">ATP synthesis</keyword>
<keyword id="KW-0997">Cell inner membrane</keyword>
<keyword id="KW-1003">Cell membrane</keyword>
<keyword id="KW-0139">CF(1)</keyword>
<keyword id="KW-0375">Hydrogen ion transport</keyword>
<keyword id="KW-0406">Ion transport</keyword>
<keyword id="KW-0472">Membrane</keyword>
<keyword id="KW-0813">Transport</keyword>
<name>ATPD_PSYWF</name>
<sequence>MAELSTLARPYAKAAFDYAHENSVIGEWEDFLFIASSVVGDSAFVQMLENPAITAEQKADMLVSIYDEQVTSTEETPLKSLLLSTQSHTDEAQSNQALPAATPQIKNFVHQLAEQERLSLIPQVYEQFRLHRAQALKQVNAYVTSAYPLSETQRVMIQKRLEESLKASVIIHEDVDPSLLAGATVKIGDKLVDDSVRGKLKQLKTQLTA</sequence>
<protein>
    <recommendedName>
        <fullName evidence="1">ATP synthase subunit delta</fullName>
    </recommendedName>
    <alternativeName>
        <fullName evidence="1">ATP synthase F(1) sector subunit delta</fullName>
    </alternativeName>
    <alternativeName>
        <fullName evidence="1">F-type ATPase subunit delta</fullName>
        <shortName evidence="1">F-ATPase subunit delta</shortName>
    </alternativeName>
</protein>